<name>LEU3_HAEI8</name>
<accession>Q4QLS3</accession>
<sequence length="358" mass="38699">MQSYNVAVLAGDGIGPEVMAEAMKVLNKVQEKFGFKLNFNEFFVGGAAIDHCGYPLPAETLKGCDEADAILFGSVGGPKWTNLPPDQQPERGALLPLRKHFKLFCNLRPATLYKGLEKFCPLRADIAAKGFDMVVVRELTGGIYFGQPKGREGEGSQTKAFDTEVYYKYEIERIARAAFEAAMKRNKKVTSVDKANVLQSSILWRETVTEMAKDYPEVTLEHIYIDNATMQLIKAPESFDVLLCSNIFGDIISDEAAMITGSMGMLPSASLNEAGFGLYEPAGGSAPDIAGKGIANPIAQILSAAMMLRYSFNLNEAADAIESAVQKVLASGHRTADLADDSTPVSTAEMGTLITQAI</sequence>
<protein>
    <recommendedName>
        <fullName evidence="1">3-isopropylmalate dehydrogenase</fullName>
        <ecNumber evidence="1">1.1.1.85</ecNumber>
    </recommendedName>
    <alternativeName>
        <fullName evidence="1">3-IPM-DH</fullName>
    </alternativeName>
    <alternativeName>
        <fullName evidence="1">Beta-IPM dehydrogenase</fullName>
        <shortName evidence="1">IMDH</shortName>
    </alternativeName>
</protein>
<organism>
    <name type="scientific">Haemophilus influenzae (strain 86-028NP)</name>
    <dbReference type="NCBI Taxonomy" id="281310"/>
    <lineage>
        <taxon>Bacteria</taxon>
        <taxon>Pseudomonadati</taxon>
        <taxon>Pseudomonadota</taxon>
        <taxon>Gammaproteobacteria</taxon>
        <taxon>Pasteurellales</taxon>
        <taxon>Pasteurellaceae</taxon>
        <taxon>Haemophilus</taxon>
    </lineage>
</organism>
<comment type="function">
    <text evidence="1">Catalyzes the oxidation of 3-carboxy-2-hydroxy-4-methylpentanoate (3-isopropylmalate) to 3-carboxy-4-methyl-2-oxopentanoate. The product decarboxylates to 4-methyl-2 oxopentanoate.</text>
</comment>
<comment type="catalytic activity">
    <reaction evidence="1">
        <text>(2R,3S)-3-isopropylmalate + NAD(+) = 4-methyl-2-oxopentanoate + CO2 + NADH</text>
        <dbReference type="Rhea" id="RHEA:32271"/>
        <dbReference type="ChEBI" id="CHEBI:16526"/>
        <dbReference type="ChEBI" id="CHEBI:17865"/>
        <dbReference type="ChEBI" id="CHEBI:35121"/>
        <dbReference type="ChEBI" id="CHEBI:57540"/>
        <dbReference type="ChEBI" id="CHEBI:57945"/>
        <dbReference type="EC" id="1.1.1.85"/>
    </reaction>
</comment>
<comment type="cofactor">
    <cofactor evidence="1">
        <name>Mg(2+)</name>
        <dbReference type="ChEBI" id="CHEBI:18420"/>
    </cofactor>
    <cofactor evidence="1">
        <name>Mn(2+)</name>
        <dbReference type="ChEBI" id="CHEBI:29035"/>
    </cofactor>
    <text evidence="1">Binds 1 Mg(2+) or Mn(2+) ion per subunit.</text>
</comment>
<comment type="pathway">
    <text evidence="1">Amino-acid biosynthesis; L-leucine biosynthesis; L-leucine from 3-methyl-2-oxobutanoate: step 3/4.</text>
</comment>
<comment type="subunit">
    <text evidence="1">Homodimer.</text>
</comment>
<comment type="subcellular location">
    <subcellularLocation>
        <location evidence="1">Cytoplasm</location>
    </subcellularLocation>
</comment>
<comment type="similarity">
    <text evidence="1">Belongs to the isocitrate and isopropylmalate dehydrogenases family. LeuB type 1 subfamily.</text>
</comment>
<dbReference type="EC" id="1.1.1.85" evidence="1"/>
<dbReference type="EMBL" id="CP000057">
    <property type="protein sequence ID" value="AAX88024.1"/>
    <property type="molecule type" value="Genomic_DNA"/>
</dbReference>
<dbReference type="RefSeq" id="WP_011272332.1">
    <property type="nucleotide sequence ID" value="NC_007146.2"/>
</dbReference>
<dbReference type="SMR" id="Q4QLS3"/>
<dbReference type="KEGG" id="hit:NTHI1161"/>
<dbReference type="HOGENOM" id="CLU_031953_0_3_6"/>
<dbReference type="UniPathway" id="UPA00048">
    <property type="reaction ID" value="UER00072"/>
</dbReference>
<dbReference type="Proteomes" id="UP000002525">
    <property type="component" value="Chromosome"/>
</dbReference>
<dbReference type="GO" id="GO:0005829">
    <property type="term" value="C:cytosol"/>
    <property type="evidence" value="ECO:0007669"/>
    <property type="project" value="TreeGrafter"/>
</dbReference>
<dbReference type="GO" id="GO:0003862">
    <property type="term" value="F:3-isopropylmalate dehydrogenase activity"/>
    <property type="evidence" value="ECO:0007669"/>
    <property type="project" value="UniProtKB-UniRule"/>
</dbReference>
<dbReference type="GO" id="GO:0000287">
    <property type="term" value="F:magnesium ion binding"/>
    <property type="evidence" value="ECO:0007669"/>
    <property type="project" value="InterPro"/>
</dbReference>
<dbReference type="GO" id="GO:0051287">
    <property type="term" value="F:NAD binding"/>
    <property type="evidence" value="ECO:0007669"/>
    <property type="project" value="InterPro"/>
</dbReference>
<dbReference type="GO" id="GO:0009098">
    <property type="term" value="P:L-leucine biosynthetic process"/>
    <property type="evidence" value="ECO:0007669"/>
    <property type="project" value="UniProtKB-UniRule"/>
</dbReference>
<dbReference type="FunFam" id="3.40.718.10:FF:000004">
    <property type="entry name" value="3-isopropylmalate dehydrogenase"/>
    <property type="match status" value="1"/>
</dbReference>
<dbReference type="Gene3D" id="3.40.718.10">
    <property type="entry name" value="Isopropylmalate Dehydrogenase"/>
    <property type="match status" value="1"/>
</dbReference>
<dbReference type="HAMAP" id="MF_01033">
    <property type="entry name" value="LeuB_type1"/>
    <property type="match status" value="1"/>
</dbReference>
<dbReference type="InterPro" id="IPR019818">
    <property type="entry name" value="IsoCit/isopropylmalate_DH_CS"/>
</dbReference>
<dbReference type="InterPro" id="IPR024084">
    <property type="entry name" value="IsoPropMal-DH-like_dom"/>
</dbReference>
<dbReference type="InterPro" id="IPR004429">
    <property type="entry name" value="Isopropylmalate_DH"/>
</dbReference>
<dbReference type="NCBIfam" id="TIGR00169">
    <property type="entry name" value="leuB"/>
    <property type="match status" value="1"/>
</dbReference>
<dbReference type="PANTHER" id="PTHR42979">
    <property type="entry name" value="3-ISOPROPYLMALATE DEHYDROGENASE"/>
    <property type="match status" value="1"/>
</dbReference>
<dbReference type="PANTHER" id="PTHR42979:SF1">
    <property type="entry name" value="3-ISOPROPYLMALATE DEHYDROGENASE"/>
    <property type="match status" value="1"/>
</dbReference>
<dbReference type="Pfam" id="PF00180">
    <property type="entry name" value="Iso_dh"/>
    <property type="match status" value="1"/>
</dbReference>
<dbReference type="SMART" id="SM01329">
    <property type="entry name" value="Iso_dh"/>
    <property type="match status" value="1"/>
</dbReference>
<dbReference type="SUPFAM" id="SSF53659">
    <property type="entry name" value="Isocitrate/Isopropylmalate dehydrogenase-like"/>
    <property type="match status" value="1"/>
</dbReference>
<dbReference type="PROSITE" id="PS00470">
    <property type="entry name" value="IDH_IMDH"/>
    <property type="match status" value="1"/>
</dbReference>
<proteinExistence type="inferred from homology"/>
<reference key="1">
    <citation type="journal article" date="2005" name="J. Bacteriol.">
        <title>Genomic sequence of an otitis media isolate of nontypeable Haemophilus influenzae: comparative study with H. influenzae serotype d, strain KW20.</title>
        <authorList>
            <person name="Harrison A."/>
            <person name="Dyer D.W."/>
            <person name="Gillaspy A."/>
            <person name="Ray W.C."/>
            <person name="Mungur R."/>
            <person name="Carson M.B."/>
            <person name="Zhong H."/>
            <person name="Gipson J."/>
            <person name="Gipson M."/>
            <person name="Johnson L.S."/>
            <person name="Lewis L."/>
            <person name="Bakaletz L.O."/>
            <person name="Munson R.S. Jr."/>
        </authorList>
    </citation>
    <scope>NUCLEOTIDE SEQUENCE [LARGE SCALE GENOMIC DNA]</scope>
    <source>
        <strain>86-028NP</strain>
    </source>
</reference>
<gene>
    <name evidence="1" type="primary">leuB</name>
    <name type="ordered locus">NTHI1161</name>
</gene>
<feature type="chain" id="PRO_0000083699" description="3-isopropylmalate dehydrogenase">
    <location>
        <begin position="1"/>
        <end position="358"/>
    </location>
</feature>
<feature type="binding site" evidence="1">
    <location>
        <begin position="77"/>
        <end position="90"/>
    </location>
    <ligand>
        <name>NAD(+)</name>
        <dbReference type="ChEBI" id="CHEBI:57540"/>
    </ligand>
</feature>
<feature type="binding site" evidence="1">
    <location>
        <position position="98"/>
    </location>
    <ligand>
        <name>substrate</name>
    </ligand>
</feature>
<feature type="binding site" evidence="1">
    <location>
        <position position="108"/>
    </location>
    <ligand>
        <name>substrate</name>
    </ligand>
</feature>
<feature type="binding site" evidence="1">
    <location>
        <position position="137"/>
    </location>
    <ligand>
        <name>substrate</name>
    </ligand>
</feature>
<feature type="binding site" evidence="1">
    <location>
        <position position="226"/>
    </location>
    <ligand>
        <name>Mg(2+)</name>
        <dbReference type="ChEBI" id="CHEBI:18420"/>
    </ligand>
</feature>
<feature type="binding site" evidence="1">
    <location>
        <position position="226"/>
    </location>
    <ligand>
        <name>substrate</name>
    </ligand>
</feature>
<feature type="binding site" evidence="1">
    <location>
        <position position="250"/>
    </location>
    <ligand>
        <name>Mg(2+)</name>
        <dbReference type="ChEBI" id="CHEBI:18420"/>
    </ligand>
</feature>
<feature type="binding site" evidence="1">
    <location>
        <position position="254"/>
    </location>
    <ligand>
        <name>Mg(2+)</name>
        <dbReference type="ChEBI" id="CHEBI:18420"/>
    </ligand>
</feature>
<feature type="binding site" evidence="1">
    <location>
        <begin position="284"/>
        <end position="296"/>
    </location>
    <ligand>
        <name>NAD(+)</name>
        <dbReference type="ChEBI" id="CHEBI:57540"/>
    </ligand>
</feature>
<feature type="site" description="Important for catalysis" evidence="1">
    <location>
        <position position="144"/>
    </location>
</feature>
<feature type="site" description="Important for catalysis" evidence="1">
    <location>
        <position position="194"/>
    </location>
</feature>
<keyword id="KW-0028">Amino-acid biosynthesis</keyword>
<keyword id="KW-0100">Branched-chain amino acid biosynthesis</keyword>
<keyword id="KW-0963">Cytoplasm</keyword>
<keyword id="KW-0432">Leucine biosynthesis</keyword>
<keyword id="KW-0460">Magnesium</keyword>
<keyword id="KW-0464">Manganese</keyword>
<keyword id="KW-0479">Metal-binding</keyword>
<keyword id="KW-0520">NAD</keyword>
<keyword id="KW-0560">Oxidoreductase</keyword>
<evidence type="ECO:0000255" key="1">
    <source>
        <dbReference type="HAMAP-Rule" id="MF_01033"/>
    </source>
</evidence>